<reference key="1">
    <citation type="journal article" date="2007" name="PLoS ONE">
        <title>Analysis of the neurotoxin complex genes in Clostridium botulinum A1-A4 and B1 strains: BoNT/A3, /Ba4 and /B1 clusters are located within plasmids.</title>
        <authorList>
            <person name="Smith T.J."/>
            <person name="Hill K.K."/>
            <person name="Foley B.T."/>
            <person name="Detter J.C."/>
            <person name="Munk A.C."/>
            <person name="Bruce D.C."/>
            <person name="Doggett N.A."/>
            <person name="Smith L.A."/>
            <person name="Marks J.D."/>
            <person name="Xie G."/>
            <person name="Brettin T.S."/>
        </authorList>
    </citation>
    <scope>NUCLEOTIDE SEQUENCE [LARGE SCALE GENOMIC DNA]</scope>
    <source>
        <strain>ATCC 19397 / Type A</strain>
    </source>
</reference>
<keyword id="KW-0030">Aminoacyl-tRNA synthetase</keyword>
<keyword id="KW-0067">ATP-binding</keyword>
<keyword id="KW-0963">Cytoplasm</keyword>
<keyword id="KW-0436">Ligase</keyword>
<keyword id="KW-0547">Nucleotide-binding</keyword>
<keyword id="KW-0648">Protein biosynthesis</keyword>
<accession>A7FYU0</accession>
<dbReference type="EC" id="6.1.1.15" evidence="1"/>
<dbReference type="EMBL" id="CP000726">
    <property type="protein sequence ID" value="ABS34179.1"/>
    <property type="molecule type" value="Genomic_DNA"/>
</dbReference>
<dbReference type="RefSeq" id="WP_004450718.1">
    <property type="nucleotide sequence ID" value="NC_009697.1"/>
</dbReference>
<dbReference type="SMR" id="A7FYU0"/>
<dbReference type="GeneID" id="5184574"/>
<dbReference type="KEGG" id="cba:CLB_3402"/>
<dbReference type="HOGENOM" id="CLU_001882_4_2_9"/>
<dbReference type="GO" id="GO:0017101">
    <property type="term" value="C:aminoacyl-tRNA synthetase multienzyme complex"/>
    <property type="evidence" value="ECO:0007669"/>
    <property type="project" value="TreeGrafter"/>
</dbReference>
<dbReference type="GO" id="GO:0005737">
    <property type="term" value="C:cytoplasm"/>
    <property type="evidence" value="ECO:0007669"/>
    <property type="project" value="UniProtKB-SubCell"/>
</dbReference>
<dbReference type="GO" id="GO:0005524">
    <property type="term" value="F:ATP binding"/>
    <property type="evidence" value="ECO:0007669"/>
    <property type="project" value="UniProtKB-UniRule"/>
</dbReference>
<dbReference type="GO" id="GO:0140096">
    <property type="term" value="F:catalytic activity, acting on a protein"/>
    <property type="evidence" value="ECO:0007669"/>
    <property type="project" value="UniProtKB-ARBA"/>
</dbReference>
<dbReference type="GO" id="GO:0004827">
    <property type="term" value="F:proline-tRNA ligase activity"/>
    <property type="evidence" value="ECO:0007669"/>
    <property type="project" value="UniProtKB-UniRule"/>
</dbReference>
<dbReference type="GO" id="GO:0016740">
    <property type="term" value="F:transferase activity"/>
    <property type="evidence" value="ECO:0007669"/>
    <property type="project" value="UniProtKB-ARBA"/>
</dbReference>
<dbReference type="GO" id="GO:0006433">
    <property type="term" value="P:prolyl-tRNA aminoacylation"/>
    <property type="evidence" value="ECO:0007669"/>
    <property type="project" value="UniProtKB-UniRule"/>
</dbReference>
<dbReference type="CDD" id="cd00862">
    <property type="entry name" value="ProRS_anticodon_zinc"/>
    <property type="match status" value="1"/>
</dbReference>
<dbReference type="CDD" id="cd00778">
    <property type="entry name" value="ProRS_core_arch_euk"/>
    <property type="match status" value="1"/>
</dbReference>
<dbReference type="FunFam" id="3.40.50.800:FF:000005">
    <property type="entry name" value="bifunctional glutamate/proline--tRNA ligase"/>
    <property type="match status" value="1"/>
</dbReference>
<dbReference type="FunFam" id="3.30.110.30:FF:000005">
    <property type="entry name" value="Proline--tRNA ligase"/>
    <property type="match status" value="1"/>
</dbReference>
<dbReference type="FunFam" id="3.30.930.10:FF:000023">
    <property type="entry name" value="Proline--tRNA ligase"/>
    <property type="match status" value="1"/>
</dbReference>
<dbReference type="Gene3D" id="3.40.50.800">
    <property type="entry name" value="Anticodon-binding domain"/>
    <property type="match status" value="1"/>
</dbReference>
<dbReference type="Gene3D" id="3.30.930.10">
    <property type="entry name" value="Bira Bifunctional Protein, Domain 2"/>
    <property type="match status" value="1"/>
</dbReference>
<dbReference type="Gene3D" id="3.30.110.30">
    <property type="entry name" value="C-terminal domain of ProRS"/>
    <property type="match status" value="1"/>
</dbReference>
<dbReference type="HAMAP" id="MF_01571">
    <property type="entry name" value="Pro_tRNA_synth_type3"/>
    <property type="match status" value="1"/>
</dbReference>
<dbReference type="InterPro" id="IPR002314">
    <property type="entry name" value="aa-tRNA-synt_IIb"/>
</dbReference>
<dbReference type="InterPro" id="IPR006195">
    <property type="entry name" value="aa-tRNA-synth_II"/>
</dbReference>
<dbReference type="InterPro" id="IPR045864">
    <property type="entry name" value="aa-tRNA-synth_II/BPL/LPL"/>
</dbReference>
<dbReference type="InterPro" id="IPR004154">
    <property type="entry name" value="Anticodon-bd"/>
</dbReference>
<dbReference type="InterPro" id="IPR036621">
    <property type="entry name" value="Anticodon-bd_dom_sf"/>
</dbReference>
<dbReference type="InterPro" id="IPR002316">
    <property type="entry name" value="Pro-tRNA-ligase_IIa"/>
</dbReference>
<dbReference type="InterPro" id="IPR004499">
    <property type="entry name" value="Pro-tRNA-ligase_IIa_arc-type"/>
</dbReference>
<dbReference type="InterPro" id="IPR016061">
    <property type="entry name" value="Pro-tRNA_ligase_II_C"/>
</dbReference>
<dbReference type="InterPro" id="IPR017449">
    <property type="entry name" value="Pro-tRNA_synth_II"/>
</dbReference>
<dbReference type="InterPro" id="IPR033721">
    <property type="entry name" value="ProRS_core_arch_euk"/>
</dbReference>
<dbReference type="NCBIfam" id="TIGR00408">
    <property type="entry name" value="proS_fam_I"/>
    <property type="match status" value="1"/>
</dbReference>
<dbReference type="PANTHER" id="PTHR43382:SF2">
    <property type="entry name" value="BIFUNCTIONAL GLUTAMATE_PROLINE--TRNA LIGASE"/>
    <property type="match status" value="1"/>
</dbReference>
<dbReference type="PANTHER" id="PTHR43382">
    <property type="entry name" value="PROLYL-TRNA SYNTHETASE"/>
    <property type="match status" value="1"/>
</dbReference>
<dbReference type="Pfam" id="PF03129">
    <property type="entry name" value="HGTP_anticodon"/>
    <property type="match status" value="1"/>
</dbReference>
<dbReference type="Pfam" id="PF09180">
    <property type="entry name" value="ProRS-C_1"/>
    <property type="match status" value="1"/>
</dbReference>
<dbReference type="Pfam" id="PF00587">
    <property type="entry name" value="tRNA-synt_2b"/>
    <property type="match status" value="1"/>
</dbReference>
<dbReference type="PRINTS" id="PR01046">
    <property type="entry name" value="TRNASYNTHPRO"/>
</dbReference>
<dbReference type="SMART" id="SM00946">
    <property type="entry name" value="ProRS-C_1"/>
    <property type="match status" value="1"/>
</dbReference>
<dbReference type="SUPFAM" id="SSF64586">
    <property type="entry name" value="C-terminal domain of ProRS"/>
    <property type="match status" value="1"/>
</dbReference>
<dbReference type="SUPFAM" id="SSF52954">
    <property type="entry name" value="Class II aaRS ABD-related"/>
    <property type="match status" value="1"/>
</dbReference>
<dbReference type="SUPFAM" id="SSF55681">
    <property type="entry name" value="Class II aaRS and biotin synthetases"/>
    <property type="match status" value="1"/>
</dbReference>
<dbReference type="PROSITE" id="PS50862">
    <property type="entry name" value="AA_TRNA_LIGASE_II"/>
    <property type="match status" value="1"/>
</dbReference>
<organism>
    <name type="scientific">Clostridium botulinum (strain ATCC 19397 / Type A)</name>
    <dbReference type="NCBI Taxonomy" id="441770"/>
    <lineage>
        <taxon>Bacteria</taxon>
        <taxon>Bacillati</taxon>
        <taxon>Bacillota</taxon>
        <taxon>Clostridia</taxon>
        <taxon>Eubacteriales</taxon>
        <taxon>Clostridiaceae</taxon>
        <taxon>Clostridium</taxon>
    </lineage>
</organism>
<evidence type="ECO:0000255" key="1">
    <source>
        <dbReference type="HAMAP-Rule" id="MF_01571"/>
    </source>
</evidence>
<comment type="function">
    <text evidence="1">Catalyzes the attachment of proline to tRNA(Pro) in a two-step reaction: proline is first activated by ATP to form Pro-AMP and then transferred to the acceptor end of tRNA(Pro).</text>
</comment>
<comment type="catalytic activity">
    <reaction evidence="1">
        <text>tRNA(Pro) + L-proline + ATP = L-prolyl-tRNA(Pro) + AMP + diphosphate</text>
        <dbReference type="Rhea" id="RHEA:14305"/>
        <dbReference type="Rhea" id="RHEA-COMP:9700"/>
        <dbReference type="Rhea" id="RHEA-COMP:9702"/>
        <dbReference type="ChEBI" id="CHEBI:30616"/>
        <dbReference type="ChEBI" id="CHEBI:33019"/>
        <dbReference type="ChEBI" id="CHEBI:60039"/>
        <dbReference type="ChEBI" id="CHEBI:78442"/>
        <dbReference type="ChEBI" id="CHEBI:78532"/>
        <dbReference type="ChEBI" id="CHEBI:456215"/>
        <dbReference type="EC" id="6.1.1.15"/>
    </reaction>
</comment>
<comment type="subunit">
    <text evidence="1">Homodimer.</text>
</comment>
<comment type="subcellular location">
    <subcellularLocation>
        <location evidence="1">Cytoplasm</location>
    </subcellularLocation>
</comment>
<comment type="domain">
    <text evidence="1">Consists of three domains: the N-terminal catalytic domain, the anticodon-binding domain and the C-terminal extension.</text>
</comment>
<comment type="similarity">
    <text evidence="1">Belongs to the class-II aminoacyl-tRNA synthetase family. ProS type 3 subfamily.</text>
</comment>
<gene>
    <name evidence="1" type="primary">proS</name>
    <name type="ordered locus">CLB_3402</name>
</gene>
<feature type="chain" id="PRO_1000073596" description="Proline--tRNA ligase">
    <location>
        <begin position="1"/>
        <end position="478"/>
    </location>
</feature>
<sequence length="478" mass="54921">MAGDKKFVEDITPMDEDFAQWYTDIVKKAELADYSSIRGCMIIRPNGYGIWENIQKYVDTKLKEYGHENVSMPIFIPENLLQKEKDHVEGFAPEVAWVTHGGDDELAERLCVRPTSETLFCEHYAKIVQSYKDLPKLYNQWCSVVRWEKTTRPFLRTTEFLWQEGHTIHETKEEAESHSLKILNMYSRLCEDMLAMPVVMGKKTDKEKFAGADDTYTIESLMHDGKALQAGTSHYLGQNFSKAFAIQFSDRNGKLDYPHYTTWAVTTRLIGAIIMVHGDNSGLKLPPRIAPTQAVIIPVAQHKEGVLEKAKELKEKLAKVVRVKLDDSDKMPGWKYSEYEMKGIPLRIEIGPKDIEKNQAVLVRRDNREKTIVSLDEIEIKVQEMLDIIHNSMLEEAKKTRDEKTYVATNMEEFEDTIENKPGFIKAMWCGDRACEDKIREVTGATSRCMPFEQEVVSDTCVCCGKKAKNLVYWGRAY</sequence>
<protein>
    <recommendedName>
        <fullName evidence="1">Proline--tRNA ligase</fullName>
        <ecNumber evidence="1">6.1.1.15</ecNumber>
    </recommendedName>
    <alternativeName>
        <fullName evidence="1">Prolyl-tRNA synthetase</fullName>
        <shortName evidence="1">ProRS</shortName>
    </alternativeName>
</protein>
<name>SYP_CLOB1</name>
<proteinExistence type="inferred from homology"/>